<dbReference type="EC" id="2.4.2.9" evidence="1"/>
<dbReference type="EMBL" id="X73329">
    <property type="protein sequence ID" value="CAA51755.1"/>
    <property type="molecule type" value="Genomic_DNA"/>
</dbReference>
<dbReference type="EMBL" id="AM406671">
    <property type="protein sequence ID" value="CAL98744.1"/>
    <property type="molecule type" value="Genomic_DNA"/>
</dbReference>
<dbReference type="RefSeq" id="WP_011835873.1">
    <property type="nucleotide sequence ID" value="NZ_WJVF01000009.1"/>
</dbReference>
<dbReference type="SMR" id="P50926"/>
<dbReference type="STRING" id="416870.llmg_2176"/>
<dbReference type="GeneID" id="89634283"/>
<dbReference type="KEGG" id="llm:llmg_2176"/>
<dbReference type="eggNOG" id="COG0035">
    <property type="taxonomic scope" value="Bacteria"/>
</dbReference>
<dbReference type="HOGENOM" id="CLU_067096_2_2_9"/>
<dbReference type="OrthoDB" id="9781675at2"/>
<dbReference type="PhylomeDB" id="P50926"/>
<dbReference type="UniPathway" id="UPA00574">
    <property type="reaction ID" value="UER00636"/>
</dbReference>
<dbReference type="Proteomes" id="UP000000364">
    <property type="component" value="Chromosome"/>
</dbReference>
<dbReference type="GO" id="GO:0005525">
    <property type="term" value="F:GTP binding"/>
    <property type="evidence" value="ECO:0007669"/>
    <property type="project" value="UniProtKB-KW"/>
</dbReference>
<dbReference type="GO" id="GO:0000287">
    <property type="term" value="F:magnesium ion binding"/>
    <property type="evidence" value="ECO:0007669"/>
    <property type="project" value="UniProtKB-UniRule"/>
</dbReference>
<dbReference type="GO" id="GO:0004845">
    <property type="term" value="F:uracil phosphoribosyltransferase activity"/>
    <property type="evidence" value="ECO:0007669"/>
    <property type="project" value="UniProtKB-UniRule"/>
</dbReference>
<dbReference type="GO" id="GO:0044206">
    <property type="term" value="P:UMP salvage"/>
    <property type="evidence" value="ECO:0007669"/>
    <property type="project" value="UniProtKB-UniRule"/>
</dbReference>
<dbReference type="GO" id="GO:0006223">
    <property type="term" value="P:uracil salvage"/>
    <property type="evidence" value="ECO:0007669"/>
    <property type="project" value="InterPro"/>
</dbReference>
<dbReference type="CDD" id="cd06223">
    <property type="entry name" value="PRTases_typeI"/>
    <property type="match status" value="1"/>
</dbReference>
<dbReference type="FunFam" id="3.40.50.2020:FF:000003">
    <property type="entry name" value="Uracil phosphoribosyltransferase"/>
    <property type="match status" value="1"/>
</dbReference>
<dbReference type="Gene3D" id="3.40.50.2020">
    <property type="match status" value="1"/>
</dbReference>
<dbReference type="HAMAP" id="MF_01218_B">
    <property type="entry name" value="Upp_B"/>
    <property type="match status" value="1"/>
</dbReference>
<dbReference type="InterPro" id="IPR000836">
    <property type="entry name" value="PRibTrfase_dom"/>
</dbReference>
<dbReference type="InterPro" id="IPR029057">
    <property type="entry name" value="PRTase-like"/>
</dbReference>
<dbReference type="InterPro" id="IPR034332">
    <property type="entry name" value="Upp_B"/>
</dbReference>
<dbReference type="InterPro" id="IPR050054">
    <property type="entry name" value="UPRTase/APRTase"/>
</dbReference>
<dbReference type="InterPro" id="IPR005765">
    <property type="entry name" value="Ura_phspho_trans"/>
</dbReference>
<dbReference type="NCBIfam" id="NF001097">
    <property type="entry name" value="PRK00129.1"/>
    <property type="match status" value="1"/>
</dbReference>
<dbReference type="NCBIfam" id="TIGR01091">
    <property type="entry name" value="upp"/>
    <property type="match status" value="1"/>
</dbReference>
<dbReference type="PANTHER" id="PTHR32315">
    <property type="entry name" value="ADENINE PHOSPHORIBOSYLTRANSFERASE"/>
    <property type="match status" value="1"/>
</dbReference>
<dbReference type="PANTHER" id="PTHR32315:SF4">
    <property type="entry name" value="URACIL PHOSPHORIBOSYLTRANSFERASE, CHLOROPLASTIC"/>
    <property type="match status" value="1"/>
</dbReference>
<dbReference type="Pfam" id="PF14681">
    <property type="entry name" value="UPRTase"/>
    <property type="match status" value="1"/>
</dbReference>
<dbReference type="SUPFAM" id="SSF53271">
    <property type="entry name" value="PRTase-like"/>
    <property type="match status" value="1"/>
</dbReference>
<comment type="function">
    <text evidence="1">Catalyzes the conversion of uracil and 5-phospho-alpha-D-ribose 1-diphosphate (PRPP) to UMP and diphosphate.</text>
</comment>
<comment type="catalytic activity">
    <reaction evidence="1">
        <text>UMP + diphosphate = 5-phospho-alpha-D-ribose 1-diphosphate + uracil</text>
        <dbReference type="Rhea" id="RHEA:13017"/>
        <dbReference type="ChEBI" id="CHEBI:17568"/>
        <dbReference type="ChEBI" id="CHEBI:33019"/>
        <dbReference type="ChEBI" id="CHEBI:57865"/>
        <dbReference type="ChEBI" id="CHEBI:58017"/>
        <dbReference type="EC" id="2.4.2.9"/>
    </reaction>
</comment>
<comment type="cofactor">
    <cofactor evidence="1">
        <name>Mg(2+)</name>
        <dbReference type="ChEBI" id="CHEBI:18420"/>
    </cofactor>
    <text evidence="1">Binds 1 Mg(2+) ion per subunit. The magnesium is bound as Mg-PRPP.</text>
</comment>
<comment type="activity regulation">
    <text evidence="1">Allosterically activated by GTP.</text>
</comment>
<comment type="pathway">
    <text evidence="1">Pyrimidine metabolism; UMP biosynthesis via salvage pathway; UMP from uracil: step 1/1.</text>
</comment>
<comment type="similarity">
    <text evidence="1">Belongs to the UPRTase family.</text>
</comment>
<reference key="1">
    <citation type="journal article" date="1994" name="J. Bacteriol.">
        <title>Cloning and characterization of upp, a gene encoding uracil phosphoribosyltransferase from Lactococcus lactis.</title>
        <authorList>
            <person name="Martinussen J."/>
            <person name="Hammer K."/>
        </authorList>
    </citation>
    <scope>NUCLEOTIDE SEQUENCE [GENOMIC DNA]</scope>
</reference>
<reference key="2">
    <citation type="journal article" date="2007" name="J. Bacteriol.">
        <title>The complete genome sequence of the lactic acid bacterial paradigm Lactococcus lactis subsp. cremoris MG1363.</title>
        <authorList>
            <person name="Wegmann U."/>
            <person name="O'Connell-Motherway M."/>
            <person name="Zomer A."/>
            <person name="Buist G."/>
            <person name="Shearman C."/>
            <person name="Canchaya C."/>
            <person name="Ventura M."/>
            <person name="Goesmann A."/>
            <person name="Gasson M.J."/>
            <person name="Kuipers O.P."/>
            <person name="van Sinderen D."/>
            <person name="Kok J."/>
        </authorList>
    </citation>
    <scope>NUCLEOTIDE SEQUENCE [LARGE SCALE GENOMIC DNA]</scope>
    <source>
        <strain>MG1363</strain>
    </source>
</reference>
<gene>
    <name evidence="1" type="primary">upp</name>
    <name type="ordered locus">llmg_2176</name>
</gene>
<name>UPP_LACLM</name>
<sequence length="211" mass="23231">MSKFQVVEHPLIQHKLSILRRKEASTKEFRELVDEIGMLMAYEVSRDLPLEDVEIETPVQKTTVKQIAGKKLAIVPILRAGIGMVDGILKLIPAARVGHIGMYRDEETLKPVEYLVKLPADIADRQIFLVDPMLATGGSAILAVDSLKKRNAKAENIKFVCLVAAPEGVKALQEAHPDIEIYTAALDEKLNEHGYIVPGLGDAGDRLFGTK</sequence>
<keyword id="KW-0021">Allosteric enzyme</keyword>
<keyword id="KW-0328">Glycosyltransferase</keyword>
<keyword id="KW-0342">GTP-binding</keyword>
<keyword id="KW-0460">Magnesium</keyword>
<keyword id="KW-0547">Nucleotide-binding</keyword>
<keyword id="KW-0808">Transferase</keyword>
<organism>
    <name type="scientific">Lactococcus lactis subsp. cremoris (strain MG1363)</name>
    <dbReference type="NCBI Taxonomy" id="416870"/>
    <lineage>
        <taxon>Bacteria</taxon>
        <taxon>Bacillati</taxon>
        <taxon>Bacillota</taxon>
        <taxon>Bacilli</taxon>
        <taxon>Lactobacillales</taxon>
        <taxon>Streptococcaceae</taxon>
        <taxon>Lactococcus</taxon>
        <taxon>Lactococcus cremoris subsp. cremoris</taxon>
    </lineage>
</organism>
<accession>P50926</accession>
<accession>A2RN56</accession>
<evidence type="ECO:0000255" key="1">
    <source>
        <dbReference type="HAMAP-Rule" id="MF_01218"/>
    </source>
</evidence>
<feature type="chain" id="PRO_0000120837" description="Uracil phosphoribosyltransferase">
    <location>
        <begin position="1"/>
        <end position="211"/>
    </location>
</feature>
<feature type="binding site" evidence="1">
    <location>
        <position position="79"/>
    </location>
    <ligand>
        <name>5-phospho-alpha-D-ribose 1-diphosphate</name>
        <dbReference type="ChEBI" id="CHEBI:58017"/>
    </ligand>
</feature>
<feature type="binding site" evidence="1">
    <location>
        <position position="104"/>
    </location>
    <ligand>
        <name>5-phospho-alpha-D-ribose 1-diphosphate</name>
        <dbReference type="ChEBI" id="CHEBI:58017"/>
    </ligand>
</feature>
<feature type="binding site" evidence="1">
    <location>
        <begin position="131"/>
        <end position="139"/>
    </location>
    <ligand>
        <name>5-phospho-alpha-D-ribose 1-diphosphate</name>
        <dbReference type="ChEBI" id="CHEBI:58017"/>
    </ligand>
</feature>
<feature type="binding site" evidence="1">
    <location>
        <position position="196"/>
    </location>
    <ligand>
        <name>uracil</name>
        <dbReference type="ChEBI" id="CHEBI:17568"/>
    </ligand>
</feature>
<feature type="binding site" evidence="1">
    <location>
        <begin position="201"/>
        <end position="203"/>
    </location>
    <ligand>
        <name>uracil</name>
        <dbReference type="ChEBI" id="CHEBI:17568"/>
    </ligand>
</feature>
<feature type="binding site" evidence="1">
    <location>
        <position position="202"/>
    </location>
    <ligand>
        <name>5-phospho-alpha-D-ribose 1-diphosphate</name>
        <dbReference type="ChEBI" id="CHEBI:58017"/>
    </ligand>
</feature>
<proteinExistence type="inferred from homology"/>
<protein>
    <recommendedName>
        <fullName evidence="1">Uracil phosphoribosyltransferase</fullName>
        <ecNumber evidence="1">2.4.2.9</ecNumber>
    </recommendedName>
    <alternativeName>
        <fullName evidence="1">UMP pyrophosphorylase</fullName>
    </alternativeName>
    <alternativeName>
        <fullName evidence="1">UPRTase</fullName>
    </alternativeName>
</protein>